<dbReference type="EMBL" id="AP009380">
    <property type="protein sequence ID" value="BAG34361.1"/>
    <property type="molecule type" value="Genomic_DNA"/>
</dbReference>
<dbReference type="RefSeq" id="WP_004583573.1">
    <property type="nucleotide sequence ID" value="NZ_CP025930.1"/>
</dbReference>
<dbReference type="SMR" id="B2RLW6"/>
<dbReference type="GeneID" id="57239570"/>
<dbReference type="KEGG" id="pgn:PGN_1842"/>
<dbReference type="eggNOG" id="COG0522">
    <property type="taxonomic scope" value="Bacteria"/>
</dbReference>
<dbReference type="HOGENOM" id="CLU_092403_0_2_10"/>
<dbReference type="OrthoDB" id="9803672at2"/>
<dbReference type="BioCyc" id="PGIN431947:G1G2V-2056-MONOMER"/>
<dbReference type="Proteomes" id="UP000008842">
    <property type="component" value="Chromosome"/>
</dbReference>
<dbReference type="GO" id="GO:0015935">
    <property type="term" value="C:small ribosomal subunit"/>
    <property type="evidence" value="ECO:0007669"/>
    <property type="project" value="InterPro"/>
</dbReference>
<dbReference type="GO" id="GO:0019843">
    <property type="term" value="F:rRNA binding"/>
    <property type="evidence" value="ECO:0007669"/>
    <property type="project" value="UniProtKB-UniRule"/>
</dbReference>
<dbReference type="GO" id="GO:0003735">
    <property type="term" value="F:structural constituent of ribosome"/>
    <property type="evidence" value="ECO:0007669"/>
    <property type="project" value="InterPro"/>
</dbReference>
<dbReference type="GO" id="GO:0042274">
    <property type="term" value="P:ribosomal small subunit biogenesis"/>
    <property type="evidence" value="ECO:0007669"/>
    <property type="project" value="TreeGrafter"/>
</dbReference>
<dbReference type="GO" id="GO:0006412">
    <property type="term" value="P:translation"/>
    <property type="evidence" value="ECO:0007669"/>
    <property type="project" value="UniProtKB-UniRule"/>
</dbReference>
<dbReference type="CDD" id="cd00165">
    <property type="entry name" value="S4"/>
    <property type="match status" value="1"/>
</dbReference>
<dbReference type="FunFam" id="1.10.1050.10:FF:000001">
    <property type="entry name" value="30S ribosomal protein S4"/>
    <property type="match status" value="1"/>
</dbReference>
<dbReference type="FunFam" id="3.10.290.10:FF:000001">
    <property type="entry name" value="30S ribosomal protein S4"/>
    <property type="match status" value="1"/>
</dbReference>
<dbReference type="Gene3D" id="1.10.1050.10">
    <property type="entry name" value="Ribosomal Protein S4 Delta 41, Chain A, domain 1"/>
    <property type="match status" value="1"/>
</dbReference>
<dbReference type="Gene3D" id="3.10.290.10">
    <property type="entry name" value="RNA-binding S4 domain"/>
    <property type="match status" value="1"/>
</dbReference>
<dbReference type="HAMAP" id="MF_01306_B">
    <property type="entry name" value="Ribosomal_uS4_B"/>
    <property type="match status" value="1"/>
</dbReference>
<dbReference type="InterPro" id="IPR022801">
    <property type="entry name" value="Ribosomal_uS4"/>
</dbReference>
<dbReference type="InterPro" id="IPR005709">
    <property type="entry name" value="Ribosomal_uS4_bac-type"/>
</dbReference>
<dbReference type="InterPro" id="IPR018079">
    <property type="entry name" value="Ribosomal_uS4_CS"/>
</dbReference>
<dbReference type="InterPro" id="IPR001912">
    <property type="entry name" value="Ribosomal_uS4_N"/>
</dbReference>
<dbReference type="InterPro" id="IPR002942">
    <property type="entry name" value="S4_RNA-bd"/>
</dbReference>
<dbReference type="InterPro" id="IPR036986">
    <property type="entry name" value="S4_RNA-bd_sf"/>
</dbReference>
<dbReference type="NCBIfam" id="NF003717">
    <property type="entry name" value="PRK05327.1"/>
    <property type="match status" value="1"/>
</dbReference>
<dbReference type="NCBIfam" id="TIGR01017">
    <property type="entry name" value="rpsD_bact"/>
    <property type="match status" value="1"/>
</dbReference>
<dbReference type="PANTHER" id="PTHR11831">
    <property type="entry name" value="30S 40S RIBOSOMAL PROTEIN"/>
    <property type="match status" value="1"/>
</dbReference>
<dbReference type="PANTHER" id="PTHR11831:SF4">
    <property type="entry name" value="SMALL RIBOSOMAL SUBUNIT PROTEIN US4M"/>
    <property type="match status" value="1"/>
</dbReference>
<dbReference type="Pfam" id="PF00163">
    <property type="entry name" value="Ribosomal_S4"/>
    <property type="match status" value="1"/>
</dbReference>
<dbReference type="Pfam" id="PF01479">
    <property type="entry name" value="S4"/>
    <property type="match status" value="1"/>
</dbReference>
<dbReference type="SMART" id="SM01390">
    <property type="entry name" value="Ribosomal_S4"/>
    <property type="match status" value="1"/>
</dbReference>
<dbReference type="SMART" id="SM00363">
    <property type="entry name" value="S4"/>
    <property type="match status" value="1"/>
</dbReference>
<dbReference type="SUPFAM" id="SSF55174">
    <property type="entry name" value="Alpha-L RNA-binding motif"/>
    <property type="match status" value="1"/>
</dbReference>
<dbReference type="PROSITE" id="PS00632">
    <property type="entry name" value="RIBOSOMAL_S4"/>
    <property type="match status" value="1"/>
</dbReference>
<dbReference type="PROSITE" id="PS50889">
    <property type="entry name" value="S4"/>
    <property type="match status" value="1"/>
</dbReference>
<name>RS4_PORG3</name>
<evidence type="ECO:0000255" key="1">
    <source>
        <dbReference type="HAMAP-Rule" id="MF_01306"/>
    </source>
</evidence>
<evidence type="ECO:0000256" key="2">
    <source>
        <dbReference type="SAM" id="MobiDB-lite"/>
    </source>
</evidence>
<evidence type="ECO:0000305" key="3"/>
<comment type="function">
    <text evidence="1">One of the primary rRNA binding proteins, it binds directly to 16S rRNA where it nucleates assembly of the body of the 30S subunit.</text>
</comment>
<comment type="function">
    <text evidence="1">With S5 and S12 plays an important role in translational accuracy.</text>
</comment>
<comment type="subunit">
    <text evidence="1">Part of the 30S ribosomal subunit. Contacts protein S5. The interaction surface between S4 and S5 is involved in control of translational fidelity.</text>
</comment>
<comment type="similarity">
    <text evidence="1">Belongs to the universal ribosomal protein uS4 family.</text>
</comment>
<gene>
    <name evidence="1" type="primary">rpsD</name>
    <name type="ordered locus">PGN_1842</name>
</gene>
<protein>
    <recommendedName>
        <fullName evidence="1">Small ribosomal subunit protein uS4</fullName>
    </recommendedName>
    <alternativeName>
        <fullName evidence="3">30S ribosomal protein S4</fullName>
    </alternativeName>
</protein>
<accession>B2RLW6</accession>
<proteinExistence type="inferred from homology"/>
<organism>
    <name type="scientific">Porphyromonas gingivalis (strain ATCC 33277 / DSM 20709 / CIP 103683 / JCM 12257 / NCTC 11834 / 2561)</name>
    <dbReference type="NCBI Taxonomy" id="431947"/>
    <lineage>
        <taxon>Bacteria</taxon>
        <taxon>Pseudomonadati</taxon>
        <taxon>Bacteroidota</taxon>
        <taxon>Bacteroidia</taxon>
        <taxon>Bacteroidales</taxon>
        <taxon>Porphyromonadaceae</taxon>
        <taxon>Porphyromonas</taxon>
    </lineage>
</organism>
<reference key="1">
    <citation type="journal article" date="2008" name="DNA Res.">
        <title>Determination of the genome sequence of Porphyromonas gingivalis strain ATCC 33277 and genomic comparison with strain W83 revealed extensive genome rearrangements in P. gingivalis.</title>
        <authorList>
            <person name="Naito M."/>
            <person name="Hirakawa H."/>
            <person name="Yamashita A."/>
            <person name="Ohara N."/>
            <person name="Shoji M."/>
            <person name="Yukitake H."/>
            <person name="Nakayama K."/>
            <person name="Toh H."/>
            <person name="Yoshimura F."/>
            <person name="Kuhara S."/>
            <person name="Hattori M."/>
            <person name="Hayashi T."/>
            <person name="Nakayama K."/>
        </authorList>
    </citation>
    <scope>NUCLEOTIDE SEQUENCE [LARGE SCALE GENOMIC DNA]</scope>
    <source>
        <strain>ATCC 33277 / DSM 20709 / CIP 103683 / JCM 12257 / NCTC 11834 / 2561</strain>
    </source>
</reference>
<feature type="chain" id="PRO_1000140773" description="Small ribosomal subunit protein uS4">
    <location>
        <begin position="1"/>
        <end position="201"/>
    </location>
</feature>
<feature type="domain" description="S4 RNA-binding" evidence="1">
    <location>
        <begin position="92"/>
        <end position="154"/>
    </location>
</feature>
<feature type="region of interest" description="Disordered" evidence="2">
    <location>
        <begin position="26"/>
        <end position="47"/>
    </location>
</feature>
<keyword id="KW-0687">Ribonucleoprotein</keyword>
<keyword id="KW-0689">Ribosomal protein</keyword>
<keyword id="KW-0694">RNA-binding</keyword>
<keyword id="KW-0699">rRNA-binding</keyword>
<sequence length="201" mass="22927">MARYTGPKSKIARKFGDPIFGADKVLSKKNYPPGQHGNNRRRKTSEYGLQLREKQKAKYTYGVLEKQFRHLFHRAQRAKGVTGELLIQFLEARLDNVVFRLGIAPTRSAARQLVSHRHITVDGSVVNIPSYSVKPGQVIGVRERSKSLEVIADALTGFNHSKYPWMEWDQSSLSGKLLHMPDRTDIPENIKEQLIVELYSK</sequence>